<name>Y1081_LISMC</name>
<comment type="similarity">
    <text evidence="1">Belongs to the UPF0637 family.</text>
</comment>
<protein>
    <recommendedName>
        <fullName evidence="1">UPF0637 protein Lm4b_01081</fullName>
    </recommendedName>
</protein>
<evidence type="ECO:0000255" key="1">
    <source>
        <dbReference type="HAMAP-Rule" id="MF_01851"/>
    </source>
</evidence>
<sequence length="204" mass="23660">MTFKGFSKKDFKTMQIPGLEARMNGIQTDIQPKFRAVGEELTTYLSAKLGDEMFLHIARHQRRSVNPPESTWLAICHDKRGYKKHPHFQVGLFDNYLFIWLAFIYENEESAKIANRFLKEKKLLADLPDNFAISPDHTEEKTYPVHDGQLKATLERFRDVKKGEFLVGKIYLPDDSHLSPGKDFIKEAEMVLDELIPLYKASLQ</sequence>
<dbReference type="EMBL" id="FM242711">
    <property type="protein sequence ID" value="CAS04847.1"/>
    <property type="molecule type" value="Genomic_DNA"/>
</dbReference>
<dbReference type="RefSeq" id="WP_003725570.1">
    <property type="nucleotide sequence ID" value="NC_012488.1"/>
</dbReference>
<dbReference type="SMR" id="C1L1Y2"/>
<dbReference type="KEGG" id="lmc:Lm4b_01081"/>
<dbReference type="HOGENOM" id="CLU_096059_0_0_9"/>
<dbReference type="Gene3D" id="3.30.930.20">
    <property type="entry name" value="Protein of unknown function DUF1054"/>
    <property type="match status" value="1"/>
</dbReference>
<dbReference type="HAMAP" id="MF_01851">
    <property type="entry name" value="UPF0637"/>
    <property type="match status" value="1"/>
</dbReference>
<dbReference type="InterPro" id="IPR009403">
    <property type="entry name" value="UPF0637"/>
</dbReference>
<dbReference type="InterPro" id="IPR053707">
    <property type="entry name" value="UPF0637_domain_sf"/>
</dbReference>
<dbReference type="Pfam" id="PF06335">
    <property type="entry name" value="DUF1054"/>
    <property type="match status" value="1"/>
</dbReference>
<dbReference type="PIRSF" id="PIRSF021332">
    <property type="entry name" value="DUF1054"/>
    <property type="match status" value="1"/>
</dbReference>
<dbReference type="SUPFAM" id="SSF142913">
    <property type="entry name" value="YktB/PF0168-like"/>
    <property type="match status" value="1"/>
</dbReference>
<gene>
    <name type="ordered locus">Lm4b_01081</name>
</gene>
<accession>C1L1Y2</accession>
<feature type="chain" id="PRO_1000216137" description="UPF0637 protein Lm4b_01081">
    <location>
        <begin position="1"/>
        <end position="204"/>
    </location>
</feature>
<reference key="1">
    <citation type="journal article" date="2012" name="BMC Genomics">
        <title>Comparative genomics and transcriptomics of lineages I, II, and III strains of Listeria monocytogenes.</title>
        <authorList>
            <person name="Hain T."/>
            <person name="Ghai R."/>
            <person name="Billion A."/>
            <person name="Kuenne C.T."/>
            <person name="Steinweg C."/>
            <person name="Izar B."/>
            <person name="Mohamed W."/>
            <person name="Mraheil M."/>
            <person name="Domann E."/>
            <person name="Schaffrath S."/>
            <person name="Karst U."/>
            <person name="Goesmann A."/>
            <person name="Oehm S."/>
            <person name="Puhler A."/>
            <person name="Merkl R."/>
            <person name="Vorwerk S."/>
            <person name="Glaser P."/>
            <person name="Garrido P."/>
            <person name="Rusniok C."/>
            <person name="Buchrieser C."/>
            <person name="Goebel W."/>
            <person name="Chakraborty T."/>
        </authorList>
    </citation>
    <scope>NUCLEOTIDE SEQUENCE [LARGE SCALE GENOMIC DNA]</scope>
    <source>
        <strain>CLIP80459</strain>
    </source>
</reference>
<proteinExistence type="inferred from homology"/>
<organism>
    <name type="scientific">Listeria monocytogenes serotype 4b (strain CLIP80459)</name>
    <dbReference type="NCBI Taxonomy" id="568819"/>
    <lineage>
        <taxon>Bacteria</taxon>
        <taxon>Bacillati</taxon>
        <taxon>Bacillota</taxon>
        <taxon>Bacilli</taxon>
        <taxon>Bacillales</taxon>
        <taxon>Listeriaceae</taxon>
        <taxon>Listeria</taxon>
    </lineage>
</organism>